<gene>
    <name evidence="1" type="primary">gcvH</name>
    <name type="ordered locus">Neut_1954</name>
</gene>
<name>GCSH_NITEC</name>
<sequence>MSVPAELKYAKSHEWIKLEADGTVTVGITQHAQELLGDMVFVELPKVGRILAQQEDCAVVESVKAASDIYAPLSGEVIAINAEVESSPEKINEDSYSAWLFKLKPANTAEIDGLLDANGYEKLLESDAH</sequence>
<proteinExistence type="inferred from homology"/>
<comment type="function">
    <text evidence="1">The glycine cleavage system catalyzes the degradation of glycine. The H protein shuttles the methylamine group of glycine from the P protein to the T protein.</text>
</comment>
<comment type="cofactor">
    <cofactor evidence="1">
        <name>(R)-lipoate</name>
        <dbReference type="ChEBI" id="CHEBI:83088"/>
    </cofactor>
    <text evidence="1">Binds 1 lipoyl cofactor covalently.</text>
</comment>
<comment type="subunit">
    <text evidence="1">The glycine cleavage system is composed of four proteins: P, T, L and H.</text>
</comment>
<comment type="similarity">
    <text evidence="1">Belongs to the GcvH family.</text>
</comment>
<protein>
    <recommendedName>
        <fullName evidence="1">Glycine cleavage system H protein</fullName>
    </recommendedName>
</protein>
<accession>Q0AEP8</accession>
<keyword id="KW-0450">Lipoyl</keyword>
<organism>
    <name type="scientific">Nitrosomonas eutropha (strain DSM 101675 / C91 / Nm57)</name>
    <dbReference type="NCBI Taxonomy" id="335283"/>
    <lineage>
        <taxon>Bacteria</taxon>
        <taxon>Pseudomonadati</taxon>
        <taxon>Pseudomonadota</taxon>
        <taxon>Betaproteobacteria</taxon>
        <taxon>Nitrosomonadales</taxon>
        <taxon>Nitrosomonadaceae</taxon>
        <taxon>Nitrosomonas</taxon>
    </lineage>
</organism>
<dbReference type="EMBL" id="CP000450">
    <property type="protein sequence ID" value="ABI60184.1"/>
    <property type="molecule type" value="Genomic_DNA"/>
</dbReference>
<dbReference type="RefSeq" id="WP_011634985.1">
    <property type="nucleotide sequence ID" value="NC_008344.1"/>
</dbReference>
<dbReference type="SMR" id="Q0AEP8"/>
<dbReference type="STRING" id="335283.Neut_1954"/>
<dbReference type="KEGG" id="net:Neut_1954"/>
<dbReference type="eggNOG" id="COG0509">
    <property type="taxonomic scope" value="Bacteria"/>
</dbReference>
<dbReference type="HOGENOM" id="CLU_097408_2_1_4"/>
<dbReference type="OrthoDB" id="9796712at2"/>
<dbReference type="Proteomes" id="UP000001966">
    <property type="component" value="Chromosome"/>
</dbReference>
<dbReference type="GO" id="GO:0005829">
    <property type="term" value="C:cytosol"/>
    <property type="evidence" value="ECO:0007669"/>
    <property type="project" value="TreeGrafter"/>
</dbReference>
<dbReference type="GO" id="GO:0005960">
    <property type="term" value="C:glycine cleavage complex"/>
    <property type="evidence" value="ECO:0007669"/>
    <property type="project" value="InterPro"/>
</dbReference>
<dbReference type="GO" id="GO:0019464">
    <property type="term" value="P:glycine decarboxylation via glycine cleavage system"/>
    <property type="evidence" value="ECO:0007669"/>
    <property type="project" value="UniProtKB-UniRule"/>
</dbReference>
<dbReference type="CDD" id="cd06848">
    <property type="entry name" value="GCS_H"/>
    <property type="match status" value="1"/>
</dbReference>
<dbReference type="Gene3D" id="2.40.50.100">
    <property type="match status" value="1"/>
</dbReference>
<dbReference type="HAMAP" id="MF_00272">
    <property type="entry name" value="GcvH"/>
    <property type="match status" value="1"/>
</dbReference>
<dbReference type="InterPro" id="IPR003016">
    <property type="entry name" value="2-oxoA_DH_lipoyl-BS"/>
</dbReference>
<dbReference type="InterPro" id="IPR000089">
    <property type="entry name" value="Biotin_lipoyl"/>
</dbReference>
<dbReference type="InterPro" id="IPR002930">
    <property type="entry name" value="GCV_H"/>
</dbReference>
<dbReference type="InterPro" id="IPR033753">
    <property type="entry name" value="GCV_H/Fam206"/>
</dbReference>
<dbReference type="InterPro" id="IPR017453">
    <property type="entry name" value="GCV_H_sub"/>
</dbReference>
<dbReference type="InterPro" id="IPR011053">
    <property type="entry name" value="Single_hybrid_motif"/>
</dbReference>
<dbReference type="NCBIfam" id="TIGR00527">
    <property type="entry name" value="gcvH"/>
    <property type="match status" value="1"/>
</dbReference>
<dbReference type="NCBIfam" id="NF002270">
    <property type="entry name" value="PRK01202.1"/>
    <property type="match status" value="1"/>
</dbReference>
<dbReference type="PANTHER" id="PTHR11715">
    <property type="entry name" value="GLYCINE CLEAVAGE SYSTEM H PROTEIN"/>
    <property type="match status" value="1"/>
</dbReference>
<dbReference type="PANTHER" id="PTHR11715:SF3">
    <property type="entry name" value="GLYCINE CLEAVAGE SYSTEM H PROTEIN-RELATED"/>
    <property type="match status" value="1"/>
</dbReference>
<dbReference type="Pfam" id="PF01597">
    <property type="entry name" value="GCV_H"/>
    <property type="match status" value="1"/>
</dbReference>
<dbReference type="SUPFAM" id="SSF51230">
    <property type="entry name" value="Single hybrid motif"/>
    <property type="match status" value="1"/>
</dbReference>
<dbReference type="PROSITE" id="PS50968">
    <property type="entry name" value="BIOTINYL_LIPOYL"/>
    <property type="match status" value="1"/>
</dbReference>
<dbReference type="PROSITE" id="PS00189">
    <property type="entry name" value="LIPOYL"/>
    <property type="match status" value="1"/>
</dbReference>
<evidence type="ECO:0000255" key="1">
    <source>
        <dbReference type="HAMAP-Rule" id="MF_00272"/>
    </source>
</evidence>
<evidence type="ECO:0000255" key="2">
    <source>
        <dbReference type="PROSITE-ProRule" id="PRU01066"/>
    </source>
</evidence>
<feature type="chain" id="PRO_0000302401" description="Glycine cleavage system H protein">
    <location>
        <begin position="1"/>
        <end position="129"/>
    </location>
</feature>
<feature type="domain" description="Lipoyl-binding" evidence="2">
    <location>
        <begin position="23"/>
        <end position="104"/>
    </location>
</feature>
<feature type="modified residue" description="N6-lipoyllysine" evidence="1">
    <location>
        <position position="64"/>
    </location>
</feature>
<reference key="1">
    <citation type="journal article" date="2007" name="Environ. Microbiol.">
        <title>Whole-genome analysis of the ammonia-oxidizing bacterium, Nitrosomonas eutropha C91: implications for niche adaptation.</title>
        <authorList>
            <person name="Stein L.Y."/>
            <person name="Arp D.J."/>
            <person name="Berube P.M."/>
            <person name="Chain P.S."/>
            <person name="Hauser L."/>
            <person name="Jetten M.S."/>
            <person name="Klotz M.G."/>
            <person name="Larimer F.W."/>
            <person name="Norton J.M."/>
            <person name="Op den Camp H.J.M."/>
            <person name="Shin M."/>
            <person name="Wei X."/>
        </authorList>
    </citation>
    <scope>NUCLEOTIDE SEQUENCE [LARGE SCALE GENOMIC DNA]</scope>
    <source>
        <strain>DSM 101675 / C91 / Nm57</strain>
    </source>
</reference>